<accession>A6T273</accession>
<name>UPPP_JANMA</name>
<evidence type="ECO:0000255" key="1">
    <source>
        <dbReference type="HAMAP-Rule" id="MF_01006"/>
    </source>
</evidence>
<protein>
    <recommendedName>
        <fullName evidence="1">Undecaprenyl-diphosphatase</fullName>
        <ecNumber evidence="1">3.6.1.27</ecNumber>
    </recommendedName>
    <alternativeName>
        <fullName evidence="1">Bacitracin resistance protein</fullName>
    </alternativeName>
    <alternativeName>
        <fullName evidence="1">Undecaprenyl pyrophosphate phosphatase</fullName>
    </alternativeName>
</protein>
<feature type="chain" id="PRO_1000062800" description="Undecaprenyl-diphosphatase">
    <location>
        <begin position="1"/>
        <end position="277"/>
    </location>
</feature>
<feature type="transmembrane region" description="Helical" evidence="1">
    <location>
        <begin position="83"/>
        <end position="103"/>
    </location>
</feature>
<feature type="transmembrane region" description="Helical" evidence="1">
    <location>
        <begin position="109"/>
        <end position="129"/>
    </location>
</feature>
<feature type="transmembrane region" description="Helical" evidence="1">
    <location>
        <begin position="188"/>
        <end position="208"/>
    </location>
</feature>
<feature type="transmembrane region" description="Helical" evidence="1">
    <location>
        <begin position="218"/>
        <end position="238"/>
    </location>
</feature>
<feature type="transmembrane region" description="Helical" evidence="1">
    <location>
        <begin position="256"/>
        <end position="276"/>
    </location>
</feature>
<organism>
    <name type="scientific">Janthinobacterium sp. (strain Marseille)</name>
    <name type="common">Minibacterium massiliensis</name>
    <dbReference type="NCBI Taxonomy" id="375286"/>
    <lineage>
        <taxon>Bacteria</taxon>
        <taxon>Pseudomonadati</taxon>
        <taxon>Pseudomonadota</taxon>
        <taxon>Betaproteobacteria</taxon>
        <taxon>Burkholderiales</taxon>
        <taxon>Oxalobacteraceae</taxon>
        <taxon>Janthinobacterium</taxon>
    </lineage>
</organism>
<dbReference type="EC" id="3.6.1.27" evidence="1"/>
<dbReference type="EMBL" id="CP000269">
    <property type="protein sequence ID" value="ABR88301.1"/>
    <property type="molecule type" value="Genomic_DNA"/>
</dbReference>
<dbReference type="RefSeq" id="WP_012080779.1">
    <property type="nucleotide sequence ID" value="NC_009659.1"/>
</dbReference>
<dbReference type="SMR" id="A6T273"/>
<dbReference type="STRING" id="375286.mma_2930"/>
<dbReference type="KEGG" id="mms:mma_2930"/>
<dbReference type="eggNOG" id="COG1968">
    <property type="taxonomic scope" value="Bacteria"/>
</dbReference>
<dbReference type="HOGENOM" id="CLU_060296_2_0_4"/>
<dbReference type="OrthoDB" id="9808289at2"/>
<dbReference type="Proteomes" id="UP000006388">
    <property type="component" value="Chromosome"/>
</dbReference>
<dbReference type="GO" id="GO:0005886">
    <property type="term" value="C:plasma membrane"/>
    <property type="evidence" value="ECO:0007669"/>
    <property type="project" value="UniProtKB-SubCell"/>
</dbReference>
<dbReference type="GO" id="GO:0050380">
    <property type="term" value="F:undecaprenyl-diphosphatase activity"/>
    <property type="evidence" value="ECO:0007669"/>
    <property type="project" value="UniProtKB-UniRule"/>
</dbReference>
<dbReference type="GO" id="GO:0071555">
    <property type="term" value="P:cell wall organization"/>
    <property type="evidence" value="ECO:0007669"/>
    <property type="project" value="UniProtKB-KW"/>
</dbReference>
<dbReference type="GO" id="GO:0009252">
    <property type="term" value="P:peptidoglycan biosynthetic process"/>
    <property type="evidence" value="ECO:0007669"/>
    <property type="project" value="UniProtKB-KW"/>
</dbReference>
<dbReference type="GO" id="GO:0008360">
    <property type="term" value="P:regulation of cell shape"/>
    <property type="evidence" value="ECO:0007669"/>
    <property type="project" value="UniProtKB-KW"/>
</dbReference>
<dbReference type="GO" id="GO:0046677">
    <property type="term" value="P:response to antibiotic"/>
    <property type="evidence" value="ECO:0007669"/>
    <property type="project" value="UniProtKB-UniRule"/>
</dbReference>
<dbReference type="HAMAP" id="MF_01006">
    <property type="entry name" value="Undec_diphosphatase"/>
    <property type="match status" value="1"/>
</dbReference>
<dbReference type="InterPro" id="IPR003824">
    <property type="entry name" value="UppP"/>
</dbReference>
<dbReference type="NCBIfam" id="NF001389">
    <property type="entry name" value="PRK00281.1-2"/>
    <property type="match status" value="1"/>
</dbReference>
<dbReference type="NCBIfam" id="NF001390">
    <property type="entry name" value="PRK00281.1-4"/>
    <property type="match status" value="1"/>
</dbReference>
<dbReference type="NCBIfam" id="TIGR00753">
    <property type="entry name" value="undec_PP_bacA"/>
    <property type="match status" value="1"/>
</dbReference>
<dbReference type="PANTHER" id="PTHR30622">
    <property type="entry name" value="UNDECAPRENYL-DIPHOSPHATASE"/>
    <property type="match status" value="1"/>
</dbReference>
<dbReference type="PANTHER" id="PTHR30622:SF3">
    <property type="entry name" value="UNDECAPRENYL-DIPHOSPHATASE"/>
    <property type="match status" value="1"/>
</dbReference>
<dbReference type="Pfam" id="PF02673">
    <property type="entry name" value="BacA"/>
    <property type="match status" value="1"/>
</dbReference>
<gene>
    <name evidence="1" type="primary">uppP</name>
    <name type="ordered locus">mma_2930</name>
</gene>
<comment type="function">
    <text evidence="1">Catalyzes the dephosphorylation of undecaprenyl diphosphate (UPP). Confers resistance to bacitracin.</text>
</comment>
<comment type="catalytic activity">
    <reaction evidence="1">
        <text>di-trans,octa-cis-undecaprenyl diphosphate + H2O = di-trans,octa-cis-undecaprenyl phosphate + phosphate + H(+)</text>
        <dbReference type="Rhea" id="RHEA:28094"/>
        <dbReference type="ChEBI" id="CHEBI:15377"/>
        <dbReference type="ChEBI" id="CHEBI:15378"/>
        <dbReference type="ChEBI" id="CHEBI:43474"/>
        <dbReference type="ChEBI" id="CHEBI:58405"/>
        <dbReference type="ChEBI" id="CHEBI:60392"/>
        <dbReference type="EC" id="3.6.1.27"/>
    </reaction>
</comment>
<comment type="subcellular location">
    <subcellularLocation>
        <location evidence="1">Cell inner membrane</location>
        <topology evidence="1">Multi-pass membrane protein</topology>
    </subcellularLocation>
</comment>
<comment type="miscellaneous">
    <text>Bacitracin is thought to be involved in the inhibition of peptidoglycan synthesis by sequestering undecaprenyl diphosphate, thereby reducing the pool of lipid carrier available.</text>
</comment>
<comment type="similarity">
    <text evidence="1">Belongs to the UppP family.</text>
</comment>
<proteinExistence type="inferred from homology"/>
<sequence>MDPILALKAIIMGIVEGFTEFLPISSTGHLILAGSLLDFTGPKVKVFEIAIQTGAMLAVVWEYRAKIAAVLGGLLTERKAQKFALNIIIAFLPAALLGLVFASKIKEKLFAPVPVAIAFIVGGFIILWIEKRNRNTDFVARVETVDDMTMLDALKVGCAQAFALIPGTSRSGASIIGGMFFGLSRKAATEFSFFLAIPTLMGATVYSVYKDRALLSMADIPLFGLGGFAAFVSAFLCVRWLLRYISTHDFTFFAYYRIVFGLFVLLSAYYGWVVWAD</sequence>
<reference key="1">
    <citation type="journal article" date="2007" name="PLoS Genet.">
        <title>Genome analysis of Minibacterium massiliensis highlights the convergent evolution of water-living bacteria.</title>
        <authorList>
            <person name="Audic S."/>
            <person name="Robert C."/>
            <person name="Campagna B."/>
            <person name="Parinello H."/>
            <person name="Claverie J.-M."/>
            <person name="Raoult D."/>
            <person name="Drancourt M."/>
        </authorList>
    </citation>
    <scope>NUCLEOTIDE SEQUENCE [LARGE SCALE GENOMIC DNA]</scope>
    <source>
        <strain>Marseille</strain>
    </source>
</reference>
<keyword id="KW-0046">Antibiotic resistance</keyword>
<keyword id="KW-0997">Cell inner membrane</keyword>
<keyword id="KW-1003">Cell membrane</keyword>
<keyword id="KW-0133">Cell shape</keyword>
<keyword id="KW-0961">Cell wall biogenesis/degradation</keyword>
<keyword id="KW-0378">Hydrolase</keyword>
<keyword id="KW-0472">Membrane</keyword>
<keyword id="KW-0573">Peptidoglycan synthesis</keyword>
<keyword id="KW-0812">Transmembrane</keyword>
<keyword id="KW-1133">Transmembrane helix</keyword>